<organism>
    <name type="scientific">Burkholderia thailandensis (strain ATCC 700388 / DSM 13276 / CCUG 48851 / CIP 106301 / E264)</name>
    <dbReference type="NCBI Taxonomy" id="271848"/>
    <lineage>
        <taxon>Bacteria</taxon>
        <taxon>Pseudomonadati</taxon>
        <taxon>Pseudomonadota</taxon>
        <taxon>Betaproteobacteria</taxon>
        <taxon>Burkholderiales</taxon>
        <taxon>Burkholderiaceae</taxon>
        <taxon>Burkholderia</taxon>
        <taxon>pseudomallei group</taxon>
    </lineage>
</organism>
<gene>
    <name evidence="1" type="primary">msbA</name>
    <name type="ordered locus">BTH_I0985</name>
</gene>
<accession>Q2SZW0</accession>
<dbReference type="EC" id="7.5.2.6" evidence="1"/>
<dbReference type="EMBL" id="CP000086">
    <property type="protein sequence ID" value="ABC39003.1"/>
    <property type="molecule type" value="Genomic_DNA"/>
</dbReference>
<dbReference type="RefSeq" id="WP_009892328.1">
    <property type="nucleotide sequence ID" value="NZ_CP008785.1"/>
</dbReference>
<dbReference type="SMR" id="Q2SZW0"/>
<dbReference type="GeneID" id="45120739"/>
<dbReference type="KEGG" id="bte:BTH_I0985"/>
<dbReference type="HOGENOM" id="CLU_000604_84_3_4"/>
<dbReference type="Proteomes" id="UP000001930">
    <property type="component" value="Chromosome I"/>
</dbReference>
<dbReference type="GO" id="GO:0005886">
    <property type="term" value="C:plasma membrane"/>
    <property type="evidence" value="ECO:0007669"/>
    <property type="project" value="UniProtKB-SubCell"/>
</dbReference>
<dbReference type="GO" id="GO:0015421">
    <property type="term" value="F:ABC-type oligopeptide transporter activity"/>
    <property type="evidence" value="ECO:0007669"/>
    <property type="project" value="TreeGrafter"/>
</dbReference>
<dbReference type="GO" id="GO:0005524">
    <property type="term" value="F:ATP binding"/>
    <property type="evidence" value="ECO:0007669"/>
    <property type="project" value="UniProtKB-KW"/>
</dbReference>
<dbReference type="GO" id="GO:0016887">
    <property type="term" value="F:ATP hydrolysis activity"/>
    <property type="evidence" value="ECO:0007669"/>
    <property type="project" value="InterPro"/>
</dbReference>
<dbReference type="GO" id="GO:0034040">
    <property type="term" value="F:ATPase-coupled lipid transmembrane transporter activity"/>
    <property type="evidence" value="ECO:0007669"/>
    <property type="project" value="InterPro"/>
</dbReference>
<dbReference type="CDD" id="cd18552">
    <property type="entry name" value="ABC_6TM_MsbA_like"/>
    <property type="match status" value="1"/>
</dbReference>
<dbReference type="FunFam" id="3.40.50.300:FF:000221">
    <property type="entry name" value="Multidrug ABC transporter ATP-binding protein"/>
    <property type="match status" value="1"/>
</dbReference>
<dbReference type="Gene3D" id="1.20.1560.10">
    <property type="entry name" value="ABC transporter type 1, transmembrane domain"/>
    <property type="match status" value="1"/>
</dbReference>
<dbReference type="Gene3D" id="3.40.50.300">
    <property type="entry name" value="P-loop containing nucleotide triphosphate hydrolases"/>
    <property type="match status" value="1"/>
</dbReference>
<dbReference type="InterPro" id="IPR003593">
    <property type="entry name" value="AAA+_ATPase"/>
</dbReference>
<dbReference type="InterPro" id="IPR011527">
    <property type="entry name" value="ABC1_TM_dom"/>
</dbReference>
<dbReference type="InterPro" id="IPR036640">
    <property type="entry name" value="ABC1_TM_sf"/>
</dbReference>
<dbReference type="InterPro" id="IPR003439">
    <property type="entry name" value="ABC_transporter-like_ATP-bd"/>
</dbReference>
<dbReference type="InterPro" id="IPR017871">
    <property type="entry name" value="ABC_transporter-like_CS"/>
</dbReference>
<dbReference type="InterPro" id="IPR011917">
    <property type="entry name" value="ABC_transpr_lipidA"/>
</dbReference>
<dbReference type="InterPro" id="IPR027417">
    <property type="entry name" value="P-loop_NTPase"/>
</dbReference>
<dbReference type="InterPro" id="IPR039421">
    <property type="entry name" value="Type_1_exporter"/>
</dbReference>
<dbReference type="NCBIfam" id="TIGR02203">
    <property type="entry name" value="MsbA_lipidA"/>
    <property type="match status" value="1"/>
</dbReference>
<dbReference type="PANTHER" id="PTHR43394:SF1">
    <property type="entry name" value="ATP-BINDING CASSETTE SUB-FAMILY B MEMBER 10, MITOCHONDRIAL"/>
    <property type="match status" value="1"/>
</dbReference>
<dbReference type="PANTHER" id="PTHR43394">
    <property type="entry name" value="ATP-DEPENDENT PERMEASE MDL1, MITOCHONDRIAL"/>
    <property type="match status" value="1"/>
</dbReference>
<dbReference type="Pfam" id="PF00664">
    <property type="entry name" value="ABC_membrane"/>
    <property type="match status" value="1"/>
</dbReference>
<dbReference type="Pfam" id="PF00005">
    <property type="entry name" value="ABC_tran"/>
    <property type="match status" value="1"/>
</dbReference>
<dbReference type="SMART" id="SM00382">
    <property type="entry name" value="AAA"/>
    <property type="match status" value="1"/>
</dbReference>
<dbReference type="SUPFAM" id="SSF90123">
    <property type="entry name" value="ABC transporter transmembrane region"/>
    <property type="match status" value="1"/>
</dbReference>
<dbReference type="SUPFAM" id="SSF52540">
    <property type="entry name" value="P-loop containing nucleoside triphosphate hydrolases"/>
    <property type="match status" value="1"/>
</dbReference>
<dbReference type="PROSITE" id="PS50929">
    <property type="entry name" value="ABC_TM1F"/>
    <property type="match status" value="1"/>
</dbReference>
<dbReference type="PROSITE" id="PS00211">
    <property type="entry name" value="ABC_TRANSPORTER_1"/>
    <property type="match status" value="1"/>
</dbReference>
<dbReference type="PROSITE" id="PS50893">
    <property type="entry name" value="ABC_TRANSPORTER_2"/>
    <property type="match status" value="1"/>
</dbReference>
<dbReference type="PROSITE" id="PS51239">
    <property type="entry name" value="MSBA"/>
    <property type="match status" value="1"/>
</dbReference>
<comment type="function">
    <text evidence="1">Involved in lipopolysaccharide (LPS) biosynthesis. Translocates lipid A-core from the inner to the outer leaflet of the inner membrane. Transmembrane domains (TMD) form a pore in the inner membrane and the ATP-binding domain (NBD) is responsible for energy generation.</text>
</comment>
<comment type="catalytic activity">
    <reaction evidence="1">
        <text>ATP + H2O + lipid A-core oligosaccharideSide 1 = ADP + phosphate + lipid A-core oligosaccharideSide 2.</text>
        <dbReference type="EC" id="7.5.2.6"/>
    </reaction>
</comment>
<comment type="subunit">
    <text evidence="1">Homodimer.</text>
</comment>
<comment type="subcellular location">
    <subcellularLocation>
        <location evidence="1">Cell inner membrane</location>
        <topology evidence="1">Multi-pass membrane protein</topology>
    </subcellularLocation>
</comment>
<comment type="domain">
    <text evidence="1">In MsbA the ATP-binding domain (NBD) and the transmembrane domain (TMD) are fused.</text>
</comment>
<comment type="similarity">
    <text evidence="1">Belongs to the ABC transporter superfamily. Lipid exporter (TC 3.A.1.106) family.</text>
</comment>
<name>MSBA_BURTA</name>
<sequence length="596" mass="64783">MSVKPTLSKPIGGQDASSPAVVMRRLWPYVKPLVWVLVAGVLAMAAVAATEAGIPALLKPLLDHGFGSKGDMTTKLYVPAAVVGLALARAIAQYASGYLLQYVSNRILLDLRIQMFERMIHTGVSFFQRETASTVINAVVFEVNQVLSVLMGVMITLVRDSLTVVFLLGYLFYLNWRLTLIVAILLPCIGWLVGKINRRLRRLNREHQTLTNQLAYIVEETVGGYKVVKVHNGESYEIGRFNELSRKLRGYSMRMTVSGGLAQPLTQFLASIALAVVLTIAVVQSSNDQTTVGGFVAFVTAMLLIISPLKHLMDVNQPLQRGMTAAELIFGLIDEPREPEGGGKPLARASGAIEFSHVSFSYGISRDGRQTLDDVSFTVAPGEMVALAGPSGSGKTTLVNLLPRFFDPSSGTVRVDGVALPEYSLHDLRNQIAMVSQDVVLFNDTIAANVAYGQTPERDGVEAALRAANLWETVTAMPDGIDTLVGDNGMRLSGGQRQRLAIARAIYKDAPILILDEATSALDSESERHVQAALETLMKGRTTLVIAHRLSTIERADRILVLEGGKIVESGSHRELLEQGGLYAHLHRIQFQQDAG</sequence>
<reference key="1">
    <citation type="journal article" date="2005" name="BMC Genomics">
        <title>Bacterial genome adaptation to niches: divergence of the potential virulence genes in three Burkholderia species of different survival strategies.</title>
        <authorList>
            <person name="Kim H.S."/>
            <person name="Schell M.A."/>
            <person name="Yu Y."/>
            <person name="Ulrich R.L."/>
            <person name="Sarria S.H."/>
            <person name="Nierman W.C."/>
            <person name="DeShazer D."/>
        </authorList>
    </citation>
    <scope>NUCLEOTIDE SEQUENCE [LARGE SCALE GENOMIC DNA]</scope>
    <source>
        <strain>ATCC 700388 / DSM 13276 / CCUG 48851 / CIP 106301 / E264</strain>
    </source>
</reference>
<feature type="chain" id="PRO_0000271619" description="ATP-dependent lipid A-core flippase">
    <location>
        <begin position="1"/>
        <end position="596"/>
    </location>
</feature>
<feature type="transmembrane region" description="Helical" evidence="1">
    <location>
        <begin position="34"/>
        <end position="54"/>
    </location>
</feature>
<feature type="transmembrane region" description="Helical" evidence="1">
    <location>
        <begin position="80"/>
        <end position="100"/>
    </location>
</feature>
<feature type="transmembrane region" description="Helical" evidence="1">
    <location>
        <begin position="138"/>
        <end position="158"/>
    </location>
</feature>
<feature type="transmembrane region" description="Helical" evidence="1">
    <location>
        <begin position="164"/>
        <end position="184"/>
    </location>
</feature>
<feature type="transmembrane region" description="Helical" evidence="1">
    <location>
        <begin position="263"/>
        <end position="283"/>
    </location>
</feature>
<feature type="transmembrane region" description="Helical" evidence="1">
    <location>
        <begin position="292"/>
        <end position="312"/>
    </location>
</feature>
<feature type="domain" description="ABC transmembrane type-1" evidence="1">
    <location>
        <begin position="38"/>
        <end position="321"/>
    </location>
</feature>
<feature type="domain" description="ABC transporter" evidence="1">
    <location>
        <begin position="353"/>
        <end position="589"/>
    </location>
</feature>
<feature type="binding site" evidence="1">
    <location>
        <begin position="389"/>
        <end position="396"/>
    </location>
    <ligand>
        <name>ATP</name>
        <dbReference type="ChEBI" id="CHEBI:30616"/>
    </ligand>
</feature>
<keyword id="KW-0067">ATP-binding</keyword>
<keyword id="KW-0997">Cell inner membrane</keyword>
<keyword id="KW-1003">Cell membrane</keyword>
<keyword id="KW-0445">Lipid transport</keyword>
<keyword id="KW-0472">Membrane</keyword>
<keyword id="KW-0547">Nucleotide-binding</keyword>
<keyword id="KW-1278">Translocase</keyword>
<keyword id="KW-0812">Transmembrane</keyword>
<keyword id="KW-1133">Transmembrane helix</keyword>
<keyword id="KW-0813">Transport</keyword>
<proteinExistence type="inferred from homology"/>
<protein>
    <recommendedName>
        <fullName evidence="1">ATP-dependent lipid A-core flippase</fullName>
        <ecNumber evidence="1">7.5.2.6</ecNumber>
    </recommendedName>
    <alternativeName>
        <fullName evidence="1">Lipid A export ATP-binding/permease protein MsbA</fullName>
    </alternativeName>
</protein>
<evidence type="ECO:0000255" key="1">
    <source>
        <dbReference type="HAMAP-Rule" id="MF_01703"/>
    </source>
</evidence>